<name>RS20_PROM5</name>
<protein>
    <recommendedName>
        <fullName evidence="1">Small ribosomal subunit protein bS20</fullName>
    </recommendedName>
    <alternativeName>
        <fullName evidence="2">30S ribosomal protein S20</fullName>
    </alternativeName>
</protein>
<organism>
    <name type="scientific">Prochlorococcus marinus (strain MIT 9515)</name>
    <dbReference type="NCBI Taxonomy" id="167542"/>
    <lineage>
        <taxon>Bacteria</taxon>
        <taxon>Bacillati</taxon>
        <taxon>Cyanobacteriota</taxon>
        <taxon>Cyanophyceae</taxon>
        <taxon>Synechococcales</taxon>
        <taxon>Prochlorococcaceae</taxon>
        <taxon>Prochlorococcus</taxon>
    </lineage>
</organism>
<accession>A2BYL3</accession>
<reference key="1">
    <citation type="journal article" date="2007" name="PLoS Genet.">
        <title>Patterns and implications of gene gain and loss in the evolution of Prochlorococcus.</title>
        <authorList>
            <person name="Kettler G.C."/>
            <person name="Martiny A.C."/>
            <person name="Huang K."/>
            <person name="Zucker J."/>
            <person name="Coleman M.L."/>
            <person name="Rodrigue S."/>
            <person name="Chen F."/>
            <person name="Lapidus A."/>
            <person name="Ferriera S."/>
            <person name="Johnson J."/>
            <person name="Steglich C."/>
            <person name="Church G.M."/>
            <person name="Richardson P."/>
            <person name="Chisholm S.W."/>
        </authorList>
    </citation>
    <scope>NUCLEOTIDE SEQUENCE [LARGE SCALE GENOMIC DNA]</scope>
    <source>
        <strain>MIT 9515</strain>
    </source>
</reference>
<sequence>MANNKSAKKRIKVAERNRLVNKSYKSTVKTLTKKTLANCEKYKLDPNSDNKNLVMFSLSEAFSLIDKAVKKNVLHKNNGANKKSKINKLVKNFLTSK</sequence>
<comment type="function">
    <text evidence="1">Binds directly to 16S ribosomal RNA.</text>
</comment>
<comment type="similarity">
    <text evidence="1">Belongs to the bacterial ribosomal protein bS20 family.</text>
</comment>
<gene>
    <name evidence="1" type="primary">rpsT</name>
    <name evidence="1" type="synonym">rps20</name>
    <name type="ordered locus">P9515_16671</name>
</gene>
<dbReference type="EMBL" id="CP000552">
    <property type="protein sequence ID" value="ABM72874.1"/>
    <property type="molecule type" value="Genomic_DNA"/>
</dbReference>
<dbReference type="RefSeq" id="WP_011820967.1">
    <property type="nucleotide sequence ID" value="NC_008817.1"/>
</dbReference>
<dbReference type="SMR" id="A2BYL3"/>
<dbReference type="STRING" id="167542.P9515_16671"/>
<dbReference type="GeneID" id="60200994"/>
<dbReference type="KEGG" id="pmc:P9515_16671"/>
<dbReference type="eggNOG" id="COG0268">
    <property type="taxonomic scope" value="Bacteria"/>
</dbReference>
<dbReference type="HOGENOM" id="CLU_160655_5_0_3"/>
<dbReference type="OrthoDB" id="9808392at2"/>
<dbReference type="Proteomes" id="UP000001589">
    <property type="component" value="Chromosome"/>
</dbReference>
<dbReference type="GO" id="GO:0015935">
    <property type="term" value="C:small ribosomal subunit"/>
    <property type="evidence" value="ECO:0007669"/>
    <property type="project" value="TreeGrafter"/>
</dbReference>
<dbReference type="GO" id="GO:0070181">
    <property type="term" value="F:small ribosomal subunit rRNA binding"/>
    <property type="evidence" value="ECO:0007669"/>
    <property type="project" value="TreeGrafter"/>
</dbReference>
<dbReference type="GO" id="GO:0003735">
    <property type="term" value="F:structural constituent of ribosome"/>
    <property type="evidence" value="ECO:0007669"/>
    <property type="project" value="InterPro"/>
</dbReference>
<dbReference type="GO" id="GO:0006412">
    <property type="term" value="P:translation"/>
    <property type="evidence" value="ECO:0007669"/>
    <property type="project" value="UniProtKB-UniRule"/>
</dbReference>
<dbReference type="Gene3D" id="1.20.58.110">
    <property type="entry name" value="Ribosomal protein S20"/>
    <property type="match status" value="1"/>
</dbReference>
<dbReference type="HAMAP" id="MF_00500">
    <property type="entry name" value="Ribosomal_bS20"/>
    <property type="match status" value="1"/>
</dbReference>
<dbReference type="InterPro" id="IPR002583">
    <property type="entry name" value="Ribosomal_bS20"/>
</dbReference>
<dbReference type="InterPro" id="IPR036510">
    <property type="entry name" value="Ribosomal_bS20_sf"/>
</dbReference>
<dbReference type="NCBIfam" id="TIGR00029">
    <property type="entry name" value="S20"/>
    <property type="match status" value="1"/>
</dbReference>
<dbReference type="PANTHER" id="PTHR33398">
    <property type="entry name" value="30S RIBOSOMAL PROTEIN S20"/>
    <property type="match status" value="1"/>
</dbReference>
<dbReference type="PANTHER" id="PTHR33398:SF1">
    <property type="entry name" value="SMALL RIBOSOMAL SUBUNIT PROTEIN BS20C"/>
    <property type="match status" value="1"/>
</dbReference>
<dbReference type="Pfam" id="PF01649">
    <property type="entry name" value="Ribosomal_S20p"/>
    <property type="match status" value="1"/>
</dbReference>
<dbReference type="SUPFAM" id="SSF46992">
    <property type="entry name" value="Ribosomal protein S20"/>
    <property type="match status" value="1"/>
</dbReference>
<evidence type="ECO:0000255" key="1">
    <source>
        <dbReference type="HAMAP-Rule" id="MF_00500"/>
    </source>
</evidence>
<evidence type="ECO:0000305" key="2"/>
<feature type="chain" id="PRO_1000014627" description="Small ribosomal subunit protein bS20">
    <location>
        <begin position="1"/>
        <end position="97"/>
    </location>
</feature>
<keyword id="KW-0687">Ribonucleoprotein</keyword>
<keyword id="KW-0689">Ribosomal protein</keyword>
<keyword id="KW-0694">RNA-binding</keyword>
<keyword id="KW-0699">rRNA-binding</keyword>
<proteinExistence type="inferred from homology"/>